<gene>
    <name type="primary">lpqE</name>
    <name type="ordered locus">BQ2027_MB3615</name>
</gene>
<keyword id="KW-1003">Cell membrane</keyword>
<keyword id="KW-0449">Lipoprotein</keyword>
<keyword id="KW-0472">Membrane</keyword>
<keyword id="KW-0564">Palmitate</keyword>
<keyword id="KW-1185">Reference proteome</keyword>
<keyword id="KW-0732">Signal</keyword>
<organism>
    <name type="scientific">Mycobacterium bovis (strain ATCC BAA-935 / AF2122/97)</name>
    <dbReference type="NCBI Taxonomy" id="233413"/>
    <lineage>
        <taxon>Bacteria</taxon>
        <taxon>Bacillati</taxon>
        <taxon>Actinomycetota</taxon>
        <taxon>Actinomycetes</taxon>
        <taxon>Mycobacteriales</taxon>
        <taxon>Mycobacteriaceae</taxon>
        <taxon>Mycobacterium</taxon>
        <taxon>Mycobacterium tuberculosis complex</taxon>
    </lineage>
</organism>
<accession>P65309</accession>
<accession>A0A1R3Y4M4</accession>
<accession>O53569</accession>
<accession>X2BPC7</accession>
<evidence type="ECO:0000255" key="1">
    <source>
        <dbReference type="PROSITE-ProRule" id="PRU00303"/>
    </source>
</evidence>
<protein>
    <recommendedName>
        <fullName>Putative lipoprotein LpqE</fullName>
    </recommendedName>
</protein>
<sequence>MNRCNIRLRLAGMTTWVASIALLAAALSGCGAGQISQTANQKPAVNGNRLTINNVLLRDIRIQAVQTSDFIQPGKAVDLVLVAVNQSPDVSDRLVGITSDIGSVTVAGDARLPASGMLFVGTPDGQIVAPGPLPSNQAAKATVNLTKPIANGLTYNFTFKFEKAGQGSVMVPISAGLATPHE</sequence>
<feature type="signal peptide" evidence="1">
    <location>
        <begin position="1"/>
        <end position="29"/>
    </location>
</feature>
<feature type="chain" id="PRO_0000018122" description="Putative lipoprotein LpqE">
    <location>
        <begin position="30"/>
        <end position="182"/>
    </location>
</feature>
<feature type="lipid moiety-binding region" description="N-palmitoyl cysteine" evidence="1">
    <location>
        <position position="30"/>
    </location>
</feature>
<feature type="lipid moiety-binding region" description="S-diacylglycerol cysteine" evidence="1">
    <location>
        <position position="30"/>
    </location>
</feature>
<reference key="1">
    <citation type="journal article" date="2003" name="Proc. Natl. Acad. Sci. U.S.A.">
        <title>The complete genome sequence of Mycobacterium bovis.</title>
        <authorList>
            <person name="Garnier T."/>
            <person name="Eiglmeier K."/>
            <person name="Camus J.-C."/>
            <person name="Medina N."/>
            <person name="Mansoor H."/>
            <person name="Pryor M."/>
            <person name="Duthoy S."/>
            <person name="Grondin S."/>
            <person name="Lacroix C."/>
            <person name="Monsempe C."/>
            <person name="Simon S."/>
            <person name="Harris B."/>
            <person name="Atkin R."/>
            <person name="Doggett J."/>
            <person name="Mayes R."/>
            <person name="Keating L."/>
            <person name="Wheeler P.R."/>
            <person name="Parkhill J."/>
            <person name="Barrell B.G."/>
            <person name="Cole S.T."/>
            <person name="Gordon S.V."/>
            <person name="Hewinson R.G."/>
        </authorList>
    </citation>
    <scope>NUCLEOTIDE SEQUENCE [LARGE SCALE GENOMIC DNA]</scope>
    <source>
        <strain>ATCC BAA-935 / AF2122/97</strain>
    </source>
</reference>
<reference key="2">
    <citation type="journal article" date="2017" name="Genome Announc.">
        <title>Updated reference genome sequence and annotation of Mycobacterium bovis AF2122/97.</title>
        <authorList>
            <person name="Malone K.M."/>
            <person name="Farrell D."/>
            <person name="Stuber T.P."/>
            <person name="Schubert O.T."/>
            <person name="Aebersold R."/>
            <person name="Robbe-Austerman S."/>
            <person name="Gordon S.V."/>
        </authorList>
    </citation>
    <scope>NUCLEOTIDE SEQUENCE [LARGE SCALE GENOMIC DNA]</scope>
    <scope>GENOME REANNOTATION</scope>
    <source>
        <strain>ATCC BAA-935 / AF2122/97</strain>
    </source>
</reference>
<comment type="subcellular location">
    <subcellularLocation>
        <location evidence="1">Cell membrane</location>
        <topology evidence="1">Lipid-anchor</topology>
    </subcellularLocation>
</comment>
<proteinExistence type="inferred from homology"/>
<dbReference type="EMBL" id="LT708304">
    <property type="protein sequence ID" value="SIU02242.1"/>
    <property type="molecule type" value="Genomic_DNA"/>
</dbReference>
<dbReference type="RefSeq" id="NP_857254.1">
    <property type="nucleotide sequence ID" value="NC_002945.3"/>
</dbReference>
<dbReference type="RefSeq" id="WP_003900715.1">
    <property type="nucleotide sequence ID" value="NC_002945.4"/>
</dbReference>
<dbReference type="SMR" id="P65309"/>
<dbReference type="KEGG" id="mbo:BQ2027_MB3615"/>
<dbReference type="PATRIC" id="fig|233413.5.peg.3961"/>
<dbReference type="Proteomes" id="UP000001419">
    <property type="component" value="Chromosome"/>
</dbReference>
<dbReference type="GO" id="GO:0005886">
    <property type="term" value="C:plasma membrane"/>
    <property type="evidence" value="ECO:0007669"/>
    <property type="project" value="UniProtKB-SubCell"/>
</dbReference>
<dbReference type="PROSITE" id="PS51257">
    <property type="entry name" value="PROKAR_LIPOPROTEIN"/>
    <property type="match status" value="1"/>
</dbReference>
<name>LPQE_MYCBO</name>